<proteinExistence type="inferred from homology"/>
<keyword id="KW-0227">DNA damage</keyword>
<keyword id="KW-0233">DNA recombination</keyword>
<keyword id="KW-0234">DNA repair</keyword>
<keyword id="KW-1185">Reference proteome</keyword>
<gene>
    <name evidence="1" type="primary">recO</name>
    <name type="ordered locus">MCA1461</name>
</gene>
<name>RECO_METCA</name>
<accession>Q608M9</accession>
<reference key="1">
    <citation type="journal article" date="2004" name="PLoS Biol.">
        <title>Genomic insights into methanotrophy: the complete genome sequence of Methylococcus capsulatus (Bath).</title>
        <authorList>
            <person name="Ward N.L."/>
            <person name="Larsen O."/>
            <person name="Sakwa J."/>
            <person name="Bruseth L."/>
            <person name="Khouri H.M."/>
            <person name="Durkin A.S."/>
            <person name="Dimitrov G."/>
            <person name="Jiang L."/>
            <person name="Scanlan D."/>
            <person name="Kang K.H."/>
            <person name="Lewis M.R."/>
            <person name="Nelson K.E."/>
            <person name="Methe B.A."/>
            <person name="Wu M."/>
            <person name="Heidelberg J.F."/>
            <person name="Paulsen I.T."/>
            <person name="Fouts D.E."/>
            <person name="Ravel J."/>
            <person name="Tettelin H."/>
            <person name="Ren Q."/>
            <person name="Read T.D."/>
            <person name="DeBoy R.T."/>
            <person name="Seshadri R."/>
            <person name="Salzberg S.L."/>
            <person name="Jensen H.B."/>
            <person name="Birkeland N.K."/>
            <person name="Nelson W.C."/>
            <person name="Dodson R.J."/>
            <person name="Grindhaug S.H."/>
            <person name="Holt I.E."/>
            <person name="Eidhammer I."/>
            <person name="Jonasen I."/>
            <person name="Vanaken S."/>
            <person name="Utterback T.R."/>
            <person name="Feldblyum T.V."/>
            <person name="Fraser C.M."/>
            <person name="Lillehaug J.R."/>
            <person name="Eisen J.A."/>
        </authorList>
    </citation>
    <scope>NUCLEOTIDE SEQUENCE [LARGE SCALE GENOMIC DNA]</scope>
    <source>
        <strain>ATCC 33009 / NCIMB 11132 / Bath</strain>
    </source>
</reference>
<organism>
    <name type="scientific">Methylococcus capsulatus (strain ATCC 33009 / NCIMB 11132 / Bath)</name>
    <dbReference type="NCBI Taxonomy" id="243233"/>
    <lineage>
        <taxon>Bacteria</taxon>
        <taxon>Pseudomonadati</taxon>
        <taxon>Pseudomonadota</taxon>
        <taxon>Gammaproteobacteria</taxon>
        <taxon>Methylococcales</taxon>
        <taxon>Methylococcaceae</taxon>
        <taxon>Methylococcus</taxon>
    </lineage>
</organism>
<comment type="function">
    <text evidence="1">Involved in DNA repair and RecF pathway recombination.</text>
</comment>
<comment type="similarity">
    <text evidence="1">Belongs to the RecO family.</text>
</comment>
<feature type="chain" id="PRO_0000204968" description="DNA repair protein RecO">
    <location>
        <begin position="1"/>
        <end position="242"/>
    </location>
</feature>
<protein>
    <recommendedName>
        <fullName evidence="1">DNA repair protein RecO</fullName>
    </recommendedName>
    <alternativeName>
        <fullName evidence="1">Recombination protein O</fullName>
    </alternativeName>
</protein>
<evidence type="ECO:0000255" key="1">
    <source>
        <dbReference type="HAMAP-Rule" id="MF_00201"/>
    </source>
</evidence>
<dbReference type="EMBL" id="AE017282">
    <property type="protein sequence ID" value="AAU92531.1"/>
    <property type="molecule type" value="Genomic_DNA"/>
</dbReference>
<dbReference type="RefSeq" id="WP_010960737.1">
    <property type="nucleotide sequence ID" value="NC_002977.6"/>
</dbReference>
<dbReference type="SMR" id="Q608M9"/>
<dbReference type="STRING" id="243233.MCA1461"/>
<dbReference type="GeneID" id="88223734"/>
<dbReference type="KEGG" id="mca:MCA1461"/>
<dbReference type="eggNOG" id="COG1381">
    <property type="taxonomic scope" value="Bacteria"/>
</dbReference>
<dbReference type="HOGENOM" id="CLU_066645_1_0_6"/>
<dbReference type="Proteomes" id="UP000006821">
    <property type="component" value="Chromosome"/>
</dbReference>
<dbReference type="GO" id="GO:0043590">
    <property type="term" value="C:bacterial nucleoid"/>
    <property type="evidence" value="ECO:0007669"/>
    <property type="project" value="TreeGrafter"/>
</dbReference>
<dbReference type="GO" id="GO:0006310">
    <property type="term" value="P:DNA recombination"/>
    <property type="evidence" value="ECO:0007669"/>
    <property type="project" value="UniProtKB-UniRule"/>
</dbReference>
<dbReference type="GO" id="GO:0006302">
    <property type="term" value="P:double-strand break repair"/>
    <property type="evidence" value="ECO:0007669"/>
    <property type="project" value="TreeGrafter"/>
</dbReference>
<dbReference type="Gene3D" id="2.40.50.140">
    <property type="entry name" value="Nucleic acid-binding proteins"/>
    <property type="match status" value="1"/>
</dbReference>
<dbReference type="Gene3D" id="1.20.1440.120">
    <property type="entry name" value="Recombination protein O, C-terminal domain"/>
    <property type="match status" value="1"/>
</dbReference>
<dbReference type="HAMAP" id="MF_00201">
    <property type="entry name" value="RecO"/>
    <property type="match status" value="1"/>
</dbReference>
<dbReference type="InterPro" id="IPR037278">
    <property type="entry name" value="ARFGAP/RecO"/>
</dbReference>
<dbReference type="InterPro" id="IPR022572">
    <property type="entry name" value="DNA_rep/recomb_RecO_N"/>
</dbReference>
<dbReference type="InterPro" id="IPR012340">
    <property type="entry name" value="NA-bd_OB-fold"/>
</dbReference>
<dbReference type="InterPro" id="IPR003717">
    <property type="entry name" value="RecO"/>
</dbReference>
<dbReference type="InterPro" id="IPR042242">
    <property type="entry name" value="RecO_C"/>
</dbReference>
<dbReference type="NCBIfam" id="TIGR00613">
    <property type="entry name" value="reco"/>
    <property type="match status" value="1"/>
</dbReference>
<dbReference type="PANTHER" id="PTHR33991">
    <property type="entry name" value="DNA REPAIR PROTEIN RECO"/>
    <property type="match status" value="1"/>
</dbReference>
<dbReference type="PANTHER" id="PTHR33991:SF1">
    <property type="entry name" value="DNA REPAIR PROTEIN RECO"/>
    <property type="match status" value="1"/>
</dbReference>
<dbReference type="Pfam" id="PF02565">
    <property type="entry name" value="RecO_C"/>
    <property type="match status" value="1"/>
</dbReference>
<dbReference type="Pfam" id="PF11967">
    <property type="entry name" value="RecO_N"/>
    <property type="match status" value="1"/>
</dbReference>
<dbReference type="SUPFAM" id="SSF57863">
    <property type="entry name" value="ArfGap/RecO-like zinc finger"/>
    <property type="match status" value="1"/>
</dbReference>
<dbReference type="SUPFAM" id="SSF50249">
    <property type="entry name" value="Nucleic acid-binding proteins"/>
    <property type="match status" value="1"/>
</dbReference>
<sequence length="242" mass="27056">MPPEAPRRGDPSRVLLDHAYLLHRRDYRETSLLLELFTLRHGRIGVIAKGARRGRQGFAAVLQPFVPLLVSWSGRGELANLNHAEAAGIGVRLQHTALFCGFYLNELLMRLLPPHDPCPELFGTYRGGLETLAAGEDLETALRSFELSLLEAIGYGLQLRVEAESGEAIRPERLYSYRIDAGPVPAGDEADAVHGMTLLALRDRRFDTSQTRTEAKRLMRRIIAHHLNGRALKSRELFRSSS</sequence>